<proteinExistence type="inferred from homology"/>
<name>Y2577_MYCTU</name>
<gene>
    <name type="ordered locus">Rv2577</name>
    <name type="ORF">MTCY227.24c</name>
</gene>
<comment type="PTM">
    <text>Predicted to be exported by the Tat system. The position of the signal peptide cleavage has not been experimentally proven.</text>
</comment>
<dbReference type="EMBL" id="AL123456">
    <property type="protein sequence ID" value="CCP45373.1"/>
    <property type="molecule type" value="Genomic_DNA"/>
</dbReference>
<dbReference type="PIR" id="H70724">
    <property type="entry name" value="H70724"/>
</dbReference>
<dbReference type="RefSeq" id="NP_217093.1">
    <property type="nucleotide sequence ID" value="NC_000962.3"/>
</dbReference>
<dbReference type="RefSeq" id="WP_003413355.1">
    <property type="nucleotide sequence ID" value="NZ_NVQJ01000023.1"/>
</dbReference>
<dbReference type="SMR" id="P9WL81"/>
<dbReference type="FunCoup" id="P9WL81">
    <property type="interactions" value="1"/>
</dbReference>
<dbReference type="STRING" id="83332.Rv2577"/>
<dbReference type="PaxDb" id="83332-Rv2577"/>
<dbReference type="GeneID" id="888207"/>
<dbReference type="KEGG" id="mtu:Rv2577"/>
<dbReference type="KEGG" id="mtv:RVBD_2577"/>
<dbReference type="TubercuList" id="Rv2577"/>
<dbReference type="eggNOG" id="COG1409">
    <property type="taxonomic scope" value="Bacteria"/>
</dbReference>
<dbReference type="InParanoid" id="P9WL81"/>
<dbReference type="OrthoDB" id="9804511at2"/>
<dbReference type="PhylomeDB" id="P9WL81"/>
<dbReference type="PHI-base" id="PHI:10877"/>
<dbReference type="Proteomes" id="UP000001584">
    <property type="component" value="Chromosome"/>
</dbReference>
<dbReference type="GO" id="GO:0005886">
    <property type="term" value="C:plasma membrane"/>
    <property type="evidence" value="ECO:0007005"/>
    <property type="project" value="MTBBASE"/>
</dbReference>
<dbReference type="GO" id="GO:0003993">
    <property type="term" value="F:acid phosphatase activity"/>
    <property type="evidence" value="ECO:0007669"/>
    <property type="project" value="InterPro"/>
</dbReference>
<dbReference type="GO" id="GO:0046872">
    <property type="term" value="F:metal ion binding"/>
    <property type="evidence" value="ECO:0007669"/>
    <property type="project" value="InterPro"/>
</dbReference>
<dbReference type="FunFam" id="3.60.21.10:FF:000124">
    <property type="entry name" value="Metallo phosphoesterase"/>
    <property type="match status" value="1"/>
</dbReference>
<dbReference type="Gene3D" id="3.60.21.10">
    <property type="match status" value="1"/>
</dbReference>
<dbReference type="Gene3D" id="2.60.40.380">
    <property type="entry name" value="Purple acid phosphatase-like, N-terminal"/>
    <property type="match status" value="1"/>
</dbReference>
<dbReference type="InterPro" id="IPR004843">
    <property type="entry name" value="Calcineurin-like_PHP_ApaH"/>
</dbReference>
<dbReference type="InterPro" id="IPR029052">
    <property type="entry name" value="Metallo-depent_PP-like"/>
</dbReference>
<dbReference type="InterPro" id="IPR039331">
    <property type="entry name" value="PPA-like"/>
</dbReference>
<dbReference type="InterPro" id="IPR008963">
    <property type="entry name" value="Purple_acid_Pase-like_N"/>
</dbReference>
<dbReference type="InterPro" id="IPR015914">
    <property type="entry name" value="Purple_acid_Pase_N"/>
</dbReference>
<dbReference type="InterPro" id="IPR006311">
    <property type="entry name" value="TAT_signal"/>
</dbReference>
<dbReference type="PANTHER" id="PTHR22953">
    <property type="entry name" value="ACID PHOSPHATASE RELATED"/>
    <property type="match status" value="1"/>
</dbReference>
<dbReference type="PANTHER" id="PTHR22953:SF153">
    <property type="entry name" value="PURPLE ACID PHOSPHATASE"/>
    <property type="match status" value="1"/>
</dbReference>
<dbReference type="Pfam" id="PF00149">
    <property type="entry name" value="Metallophos"/>
    <property type="match status" value="1"/>
</dbReference>
<dbReference type="Pfam" id="PF16656">
    <property type="entry name" value="Pur_ac_phosph_N"/>
    <property type="match status" value="1"/>
</dbReference>
<dbReference type="SUPFAM" id="SSF56300">
    <property type="entry name" value="Metallo-dependent phosphatases"/>
    <property type="match status" value="1"/>
</dbReference>
<dbReference type="SUPFAM" id="SSF49363">
    <property type="entry name" value="Purple acid phosphatase, N-terminal domain"/>
    <property type="match status" value="1"/>
</dbReference>
<dbReference type="PROSITE" id="PS51318">
    <property type="entry name" value="TAT"/>
    <property type="match status" value="1"/>
</dbReference>
<feature type="signal peptide" description="Tat-type signal" evidence="1">
    <location>
        <begin position="1"/>
        <end position="52"/>
    </location>
</feature>
<feature type="chain" id="PRO_0000104060" description="Uncharacterized protein Rv2577">
    <location>
        <begin position="53"/>
        <end position="529"/>
    </location>
</feature>
<feature type="region of interest" description="Disordered" evidence="2">
    <location>
        <begin position="1"/>
        <end position="20"/>
    </location>
</feature>
<evidence type="ECO:0000255" key="1">
    <source>
        <dbReference type="PROSITE-ProRule" id="PRU00648"/>
    </source>
</evidence>
<evidence type="ECO:0000256" key="2">
    <source>
        <dbReference type="SAM" id="MobiDB-lite"/>
    </source>
</evidence>
<organism>
    <name type="scientific">Mycobacterium tuberculosis (strain ATCC 25618 / H37Rv)</name>
    <dbReference type="NCBI Taxonomy" id="83332"/>
    <lineage>
        <taxon>Bacteria</taxon>
        <taxon>Bacillati</taxon>
        <taxon>Actinomycetota</taxon>
        <taxon>Actinomycetes</taxon>
        <taxon>Mycobacteriales</taxon>
        <taxon>Mycobacteriaceae</taxon>
        <taxon>Mycobacterium</taxon>
        <taxon>Mycobacterium tuberculosis complex</taxon>
    </lineage>
</organism>
<sequence>MGADLKQPQDADSPPKGVSRRRFLTTGAAAVVGTGVGAGGTALLSSHPRGPAVWYQRGRSGAPPVGGLHLQFGRNASTEMVVSWHTTDTVGNPRVMLGTPTSGFGSVVVAETRSYRDAKSNTEVRVNHAHLTNLTPDTDYVYAAVHDGTTPELGTARTAPSGRKPLRFTSFGDQSTPALGRLADGRYVSDNIGSPFAGDITIAIERIAPLFNLINGDLCYANLAQDRIRTWSDWFDNNTRSARYRPWMPAAGNHENEVGNGPIGYDAYQTYFAVPDSGSSPQLRGLWYSFTAGSVRVISLHNDDVCYQDGGNSYVRGYSGGEQRRWLQAELANARRDSEIDWVVVCMHQTAISTADDNNGADLGIRQEWLPLFDQYQVDLVVCGHEHHYERSHPLRGALGTDTRTPIPVDTRSDLIDSTRGTVHLVIGGGGTSKPTNALLFPQPRCQVITGVGDFDPAIRRKPSIFVLEDAPWSAFRDRDNPYGFVAFDVDPGQPGGTTSIKATYYAVTGPFGGLTVIDQFTLTKPRGG</sequence>
<reference key="1">
    <citation type="journal article" date="1998" name="Nature">
        <title>Deciphering the biology of Mycobacterium tuberculosis from the complete genome sequence.</title>
        <authorList>
            <person name="Cole S.T."/>
            <person name="Brosch R."/>
            <person name="Parkhill J."/>
            <person name="Garnier T."/>
            <person name="Churcher C.M."/>
            <person name="Harris D.E."/>
            <person name="Gordon S.V."/>
            <person name="Eiglmeier K."/>
            <person name="Gas S."/>
            <person name="Barry C.E. III"/>
            <person name="Tekaia F."/>
            <person name="Badcock K."/>
            <person name="Basham D."/>
            <person name="Brown D."/>
            <person name="Chillingworth T."/>
            <person name="Connor R."/>
            <person name="Davies R.M."/>
            <person name="Devlin K."/>
            <person name="Feltwell T."/>
            <person name="Gentles S."/>
            <person name="Hamlin N."/>
            <person name="Holroyd S."/>
            <person name="Hornsby T."/>
            <person name="Jagels K."/>
            <person name="Krogh A."/>
            <person name="McLean J."/>
            <person name="Moule S."/>
            <person name="Murphy L.D."/>
            <person name="Oliver S."/>
            <person name="Osborne J."/>
            <person name="Quail M.A."/>
            <person name="Rajandream M.A."/>
            <person name="Rogers J."/>
            <person name="Rutter S."/>
            <person name="Seeger K."/>
            <person name="Skelton S."/>
            <person name="Squares S."/>
            <person name="Squares R."/>
            <person name="Sulston J.E."/>
            <person name="Taylor K."/>
            <person name="Whitehead S."/>
            <person name="Barrell B.G."/>
        </authorList>
    </citation>
    <scope>NUCLEOTIDE SEQUENCE [LARGE SCALE GENOMIC DNA]</scope>
    <source>
        <strain>ATCC 25618 / H37Rv</strain>
    </source>
</reference>
<accession>P9WL81</accession>
<accession>L0TCU0</accession>
<accession>Q50644</accession>
<keyword id="KW-1185">Reference proteome</keyword>
<keyword id="KW-0732">Signal</keyword>
<protein>
    <recommendedName>
        <fullName>Uncharacterized protein Rv2577</fullName>
    </recommendedName>
</protein>